<comment type="function">
    <text evidence="1">The RecF protein is involved in DNA metabolism; it is required for DNA replication and normal SOS inducibility. RecF binds preferentially to single-stranded, linear DNA. It also seems to bind ATP.</text>
</comment>
<comment type="subcellular location">
    <subcellularLocation>
        <location evidence="1">Cytoplasm</location>
    </subcellularLocation>
</comment>
<comment type="similarity">
    <text evidence="1">Belongs to the RecF family.</text>
</comment>
<accession>C1CHM6</accession>
<evidence type="ECO:0000255" key="1">
    <source>
        <dbReference type="HAMAP-Rule" id="MF_00365"/>
    </source>
</evidence>
<dbReference type="EMBL" id="CP000919">
    <property type="protein sequence ID" value="ACO20011.1"/>
    <property type="molecule type" value="Genomic_DNA"/>
</dbReference>
<dbReference type="RefSeq" id="WP_000266669.1">
    <property type="nucleotide sequence ID" value="NC_012466.1"/>
</dbReference>
<dbReference type="SMR" id="C1CHM6"/>
<dbReference type="KEGG" id="sjj:SPJ_2253"/>
<dbReference type="HOGENOM" id="CLU_040267_0_1_9"/>
<dbReference type="Proteomes" id="UP000002206">
    <property type="component" value="Chromosome"/>
</dbReference>
<dbReference type="GO" id="GO:0005737">
    <property type="term" value="C:cytoplasm"/>
    <property type="evidence" value="ECO:0007669"/>
    <property type="project" value="UniProtKB-SubCell"/>
</dbReference>
<dbReference type="GO" id="GO:0005524">
    <property type="term" value="F:ATP binding"/>
    <property type="evidence" value="ECO:0007669"/>
    <property type="project" value="UniProtKB-UniRule"/>
</dbReference>
<dbReference type="GO" id="GO:0003697">
    <property type="term" value="F:single-stranded DNA binding"/>
    <property type="evidence" value="ECO:0007669"/>
    <property type="project" value="UniProtKB-UniRule"/>
</dbReference>
<dbReference type="GO" id="GO:0006260">
    <property type="term" value="P:DNA replication"/>
    <property type="evidence" value="ECO:0007669"/>
    <property type="project" value="UniProtKB-UniRule"/>
</dbReference>
<dbReference type="GO" id="GO:0000731">
    <property type="term" value="P:DNA synthesis involved in DNA repair"/>
    <property type="evidence" value="ECO:0007669"/>
    <property type="project" value="TreeGrafter"/>
</dbReference>
<dbReference type="GO" id="GO:0006302">
    <property type="term" value="P:double-strand break repair"/>
    <property type="evidence" value="ECO:0007669"/>
    <property type="project" value="TreeGrafter"/>
</dbReference>
<dbReference type="GO" id="GO:0009432">
    <property type="term" value="P:SOS response"/>
    <property type="evidence" value="ECO:0007669"/>
    <property type="project" value="UniProtKB-UniRule"/>
</dbReference>
<dbReference type="CDD" id="cd03242">
    <property type="entry name" value="ABC_RecF"/>
    <property type="match status" value="1"/>
</dbReference>
<dbReference type="FunFam" id="1.20.1050.90:FF:000002">
    <property type="entry name" value="DNA replication and repair protein RecF"/>
    <property type="match status" value="1"/>
</dbReference>
<dbReference type="Gene3D" id="3.40.50.300">
    <property type="entry name" value="P-loop containing nucleotide triphosphate hydrolases"/>
    <property type="match status" value="1"/>
</dbReference>
<dbReference type="Gene3D" id="1.20.1050.90">
    <property type="entry name" value="RecF/RecN/SMC, N-terminal domain"/>
    <property type="match status" value="1"/>
</dbReference>
<dbReference type="HAMAP" id="MF_00365">
    <property type="entry name" value="RecF"/>
    <property type="match status" value="1"/>
</dbReference>
<dbReference type="InterPro" id="IPR001238">
    <property type="entry name" value="DNA-binding_RecF"/>
</dbReference>
<dbReference type="InterPro" id="IPR018078">
    <property type="entry name" value="DNA-binding_RecF_CS"/>
</dbReference>
<dbReference type="InterPro" id="IPR027417">
    <property type="entry name" value="P-loop_NTPase"/>
</dbReference>
<dbReference type="InterPro" id="IPR003395">
    <property type="entry name" value="RecF/RecN/SMC_N"/>
</dbReference>
<dbReference type="InterPro" id="IPR042174">
    <property type="entry name" value="RecF_2"/>
</dbReference>
<dbReference type="NCBIfam" id="TIGR00611">
    <property type="entry name" value="recf"/>
    <property type="match status" value="1"/>
</dbReference>
<dbReference type="PANTHER" id="PTHR32182">
    <property type="entry name" value="DNA REPLICATION AND REPAIR PROTEIN RECF"/>
    <property type="match status" value="1"/>
</dbReference>
<dbReference type="PANTHER" id="PTHR32182:SF0">
    <property type="entry name" value="DNA REPLICATION AND REPAIR PROTEIN RECF"/>
    <property type="match status" value="1"/>
</dbReference>
<dbReference type="Pfam" id="PF02463">
    <property type="entry name" value="SMC_N"/>
    <property type="match status" value="1"/>
</dbReference>
<dbReference type="SUPFAM" id="SSF52540">
    <property type="entry name" value="P-loop containing nucleoside triphosphate hydrolases"/>
    <property type="match status" value="1"/>
</dbReference>
<dbReference type="PROSITE" id="PS00617">
    <property type="entry name" value="RECF_1"/>
    <property type="match status" value="1"/>
</dbReference>
<dbReference type="PROSITE" id="PS00618">
    <property type="entry name" value="RECF_2"/>
    <property type="match status" value="1"/>
</dbReference>
<name>RECF_STRZJ</name>
<feature type="chain" id="PRO_1000133704" description="DNA replication and repair protein RecF">
    <location>
        <begin position="1"/>
        <end position="365"/>
    </location>
</feature>
<feature type="binding site" evidence="1">
    <location>
        <begin position="30"/>
        <end position="37"/>
    </location>
    <ligand>
        <name>ATP</name>
        <dbReference type="ChEBI" id="CHEBI:30616"/>
    </ligand>
</feature>
<protein>
    <recommendedName>
        <fullName evidence="1">DNA replication and repair protein RecF</fullName>
    </recommendedName>
</protein>
<keyword id="KW-0067">ATP-binding</keyword>
<keyword id="KW-0963">Cytoplasm</keyword>
<keyword id="KW-0227">DNA damage</keyword>
<keyword id="KW-0234">DNA repair</keyword>
<keyword id="KW-0235">DNA replication</keyword>
<keyword id="KW-0238">DNA-binding</keyword>
<keyword id="KW-0547">Nucleotide-binding</keyword>
<keyword id="KW-0742">SOS response</keyword>
<sequence length="365" mass="41960">MWLQHLSLKTFRNYKETKIDFNPKLNVFLGRNAQGKTNMLEAIYFLALTRSHRTRTDKNLIHFDEEQLHLSGLVQKKTGSIPLEIELTQKGRVTKVNHLKQARLSDYVGHMNVVLFAPEDLQLIKGAPSIRRKFIDMELGQIKPIYLSDLTNYNHILKQRNTYLKSDQKIDETFLSVLDDQLVDYGCRVMNHRLDFIKKLESFGRKKHFELSNQIEELSISYQSSVNITDKQNLSESFKIALEKSRSRDLFKKNTGVGPHRDDISFYINGMDASFGSQGQHRSLVLSIKLAEIELMESITTESPILLLDDVMSELDNTRQLKLLETISQSIQTFITTTSLDHLQNLPENLSIFTIQDGKASVNGN</sequence>
<proteinExistence type="inferred from homology"/>
<organism>
    <name type="scientific">Streptococcus pneumoniae (strain JJA)</name>
    <dbReference type="NCBI Taxonomy" id="488222"/>
    <lineage>
        <taxon>Bacteria</taxon>
        <taxon>Bacillati</taxon>
        <taxon>Bacillota</taxon>
        <taxon>Bacilli</taxon>
        <taxon>Lactobacillales</taxon>
        <taxon>Streptococcaceae</taxon>
        <taxon>Streptococcus</taxon>
    </lineage>
</organism>
<reference key="1">
    <citation type="journal article" date="2010" name="Genome Biol.">
        <title>Structure and dynamics of the pan-genome of Streptococcus pneumoniae and closely related species.</title>
        <authorList>
            <person name="Donati C."/>
            <person name="Hiller N.L."/>
            <person name="Tettelin H."/>
            <person name="Muzzi A."/>
            <person name="Croucher N.J."/>
            <person name="Angiuoli S.V."/>
            <person name="Oggioni M."/>
            <person name="Dunning Hotopp J.C."/>
            <person name="Hu F.Z."/>
            <person name="Riley D.R."/>
            <person name="Covacci A."/>
            <person name="Mitchell T.J."/>
            <person name="Bentley S.D."/>
            <person name="Kilian M."/>
            <person name="Ehrlich G.D."/>
            <person name="Rappuoli R."/>
            <person name="Moxon E.R."/>
            <person name="Masignani V."/>
        </authorList>
    </citation>
    <scope>NUCLEOTIDE SEQUENCE [LARGE SCALE GENOMIC DNA]</scope>
    <source>
        <strain>JJA</strain>
    </source>
</reference>
<gene>
    <name evidence="1" type="primary">recF</name>
    <name type="ordered locus">SPJ_2253</name>
</gene>